<dbReference type="EC" id="2.1.1.163" evidence="1"/>
<dbReference type="EC" id="2.1.1.201" evidence="1"/>
<dbReference type="EMBL" id="AE017354">
    <property type="protein sequence ID" value="AAU28949.1"/>
    <property type="molecule type" value="Genomic_DNA"/>
</dbReference>
<dbReference type="RefSeq" id="WP_010948588.1">
    <property type="nucleotide sequence ID" value="NC_002942.5"/>
</dbReference>
<dbReference type="RefSeq" id="YP_096896.1">
    <property type="nucleotide sequence ID" value="NC_002942.5"/>
</dbReference>
<dbReference type="SMR" id="Q5ZRH9"/>
<dbReference type="STRING" id="272624.lpg2903"/>
<dbReference type="PaxDb" id="272624-lpg2903"/>
<dbReference type="GeneID" id="57036903"/>
<dbReference type="KEGG" id="lpn:lpg2903"/>
<dbReference type="PATRIC" id="fig|272624.6.peg.3094"/>
<dbReference type="eggNOG" id="COG2226">
    <property type="taxonomic scope" value="Bacteria"/>
</dbReference>
<dbReference type="HOGENOM" id="CLU_037990_0_0_6"/>
<dbReference type="OrthoDB" id="9808140at2"/>
<dbReference type="UniPathway" id="UPA00079">
    <property type="reaction ID" value="UER00169"/>
</dbReference>
<dbReference type="UniPathway" id="UPA00232"/>
<dbReference type="Proteomes" id="UP000000609">
    <property type="component" value="Chromosome"/>
</dbReference>
<dbReference type="GO" id="GO:0008425">
    <property type="term" value="F:2-methoxy-6-polyprenyl-1,4-benzoquinol methyltransferase activity"/>
    <property type="evidence" value="ECO:0007669"/>
    <property type="project" value="UniProtKB-UniRule"/>
</dbReference>
<dbReference type="GO" id="GO:0043770">
    <property type="term" value="F:demethylmenaquinone methyltransferase activity"/>
    <property type="evidence" value="ECO:0007669"/>
    <property type="project" value="UniProtKB-UniRule"/>
</dbReference>
<dbReference type="GO" id="GO:0009060">
    <property type="term" value="P:aerobic respiration"/>
    <property type="evidence" value="ECO:0007669"/>
    <property type="project" value="UniProtKB-UniRule"/>
</dbReference>
<dbReference type="GO" id="GO:0009234">
    <property type="term" value="P:menaquinone biosynthetic process"/>
    <property type="evidence" value="ECO:0007669"/>
    <property type="project" value="UniProtKB-UniRule"/>
</dbReference>
<dbReference type="GO" id="GO:0032259">
    <property type="term" value="P:methylation"/>
    <property type="evidence" value="ECO:0007669"/>
    <property type="project" value="UniProtKB-KW"/>
</dbReference>
<dbReference type="CDD" id="cd02440">
    <property type="entry name" value="AdoMet_MTases"/>
    <property type="match status" value="1"/>
</dbReference>
<dbReference type="Gene3D" id="3.40.50.150">
    <property type="entry name" value="Vaccinia Virus protein VP39"/>
    <property type="match status" value="1"/>
</dbReference>
<dbReference type="HAMAP" id="MF_01813">
    <property type="entry name" value="MenG_UbiE_methyltr"/>
    <property type="match status" value="1"/>
</dbReference>
<dbReference type="InterPro" id="IPR029063">
    <property type="entry name" value="SAM-dependent_MTases_sf"/>
</dbReference>
<dbReference type="InterPro" id="IPR004033">
    <property type="entry name" value="UbiE/COQ5_MeTrFase"/>
</dbReference>
<dbReference type="InterPro" id="IPR023576">
    <property type="entry name" value="UbiE/COQ5_MeTrFase_CS"/>
</dbReference>
<dbReference type="NCBIfam" id="TIGR01934">
    <property type="entry name" value="MenG_MenH_UbiE"/>
    <property type="match status" value="1"/>
</dbReference>
<dbReference type="NCBIfam" id="NF001240">
    <property type="entry name" value="PRK00216.1-1"/>
    <property type="match status" value="1"/>
</dbReference>
<dbReference type="NCBIfam" id="NF001244">
    <property type="entry name" value="PRK00216.1-5"/>
    <property type="match status" value="1"/>
</dbReference>
<dbReference type="PANTHER" id="PTHR43591:SF24">
    <property type="entry name" value="2-METHOXY-6-POLYPRENYL-1,4-BENZOQUINOL METHYLASE, MITOCHONDRIAL"/>
    <property type="match status" value="1"/>
</dbReference>
<dbReference type="PANTHER" id="PTHR43591">
    <property type="entry name" value="METHYLTRANSFERASE"/>
    <property type="match status" value="1"/>
</dbReference>
<dbReference type="Pfam" id="PF01209">
    <property type="entry name" value="Ubie_methyltran"/>
    <property type="match status" value="1"/>
</dbReference>
<dbReference type="SUPFAM" id="SSF53335">
    <property type="entry name" value="S-adenosyl-L-methionine-dependent methyltransferases"/>
    <property type="match status" value="1"/>
</dbReference>
<dbReference type="PROSITE" id="PS51608">
    <property type="entry name" value="SAM_MT_UBIE"/>
    <property type="match status" value="1"/>
</dbReference>
<dbReference type="PROSITE" id="PS01183">
    <property type="entry name" value="UBIE_1"/>
    <property type="match status" value="1"/>
</dbReference>
<dbReference type="PROSITE" id="PS01184">
    <property type="entry name" value="UBIE_2"/>
    <property type="match status" value="1"/>
</dbReference>
<sequence>MTNQKQTTHFGFKSVDWNEKEKKVAEVFHSVAKNYDRMNDLMSLGIHHLWKRYTIELSHVRPGQSVLDLAGGSGDLTRLLLQKVGDSGQVILADINAAMLHVGRDRLLDEGLFKNIRYVQGNAQCLPFADNSFHCITMGFGLRNVTDKDEALQSMYRVCKPGGKLMVLEFSTPVFPGLKPVYDWYSFNILPKIGKFVANDEASYQYLAESIRMHPDQETLKAMIERVGFEDCHYHNLSGGIVALHIAYKY</sequence>
<proteinExistence type="inferred from homology"/>
<protein>
    <recommendedName>
        <fullName evidence="1">Ubiquinone/menaquinone biosynthesis C-methyltransferase UbiE</fullName>
        <ecNumber evidence="1">2.1.1.163</ecNumber>
        <ecNumber evidence="1">2.1.1.201</ecNumber>
    </recommendedName>
    <alternativeName>
        <fullName evidence="1">2-methoxy-6-polyprenyl-1,4-benzoquinol methylase</fullName>
    </alternativeName>
    <alternativeName>
        <fullName evidence="1">Demethylmenaquinone methyltransferase</fullName>
    </alternativeName>
</protein>
<keyword id="KW-0474">Menaquinone biosynthesis</keyword>
<keyword id="KW-0489">Methyltransferase</keyword>
<keyword id="KW-1185">Reference proteome</keyword>
<keyword id="KW-0949">S-adenosyl-L-methionine</keyword>
<keyword id="KW-0808">Transferase</keyword>
<keyword id="KW-0831">Ubiquinone biosynthesis</keyword>
<accession>Q5ZRH9</accession>
<reference key="1">
    <citation type="journal article" date="2004" name="Science">
        <title>The genomic sequence of the accidental pathogen Legionella pneumophila.</title>
        <authorList>
            <person name="Chien M."/>
            <person name="Morozova I."/>
            <person name="Shi S."/>
            <person name="Sheng H."/>
            <person name="Chen J."/>
            <person name="Gomez S.M."/>
            <person name="Asamani G."/>
            <person name="Hill K."/>
            <person name="Nuara J."/>
            <person name="Feder M."/>
            <person name="Rineer J."/>
            <person name="Greenberg J.J."/>
            <person name="Steshenko V."/>
            <person name="Park S.H."/>
            <person name="Zhao B."/>
            <person name="Teplitskaya E."/>
            <person name="Edwards J.R."/>
            <person name="Pampou S."/>
            <person name="Georghiou A."/>
            <person name="Chou I.-C."/>
            <person name="Iannuccilli W."/>
            <person name="Ulz M.E."/>
            <person name="Kim D.H."/>
            <person name="Geringer-Sameth A."/>
            <person name="Goldsberry C."/>
            <person name="Morozov P."/>
            <person name="Fischer S.G."/>
            <person name="Segal G."/>
            <person name="Qu X."/>
            <person name="Rzhetsky A."/>
            <person name="Zhang P."/>
            <person name="Cayanis E."/>
            <person name="De Jong P.J."/>
            <person name="Ju J."/>
            <person name="Kalachikov S."/>
            <person name="Shuman H.A."/>
            <person name="Russo J.J."/>
        </authorList>
    </citation>
    <scope>NUCLEOTIDE SEQUENCE [LARGE SCALE GENOMIC DNA]</scope>
    <source>
        <strain>Philadelphia 1 / ATCC 33152 / DSM 7513</strain>
    </source>
</reference>
<comment type="function">
    <text evidence="1">Methyltransferase required for the conversion of demethylmenaquinol (DMKH2) to menaquinol (MKH2) and the conversion of 2-polyprenyl-6-methoxy-1,4-benzoquinol (DDMQH2) to 2-polyprenyl-3-methyl-6-methoxy-1,4-benzoquinol (DMQH2).</text>
</comment>
<comment type="catalytic activity">
    <reaction evidence="1">
        <text>a 2-demethylmenaquinol + S-adenosyl-L-methionine = a menaquinol + S-adenosyl-L-homocysteine + H(+)</text>
        <dbReference type="Rhea" id="RHEA:42640"/>
        <dbReference type="Rhea" id="RHEA-COMP:9539"/>
        <dbReference type="Rhea" id="RHEA-COMP:9563"/>
        <dbReference type="ChEBI" id="CHEBI:15378"/>
        <dbReference type="ChEBI" id="CHEBI:18151"/>
        <dbReference type="ChEBI" id="CHEBI:55437"/>
        <dbReference type="ChEBI" id="CHEBI:57856"/>
        <dbReference type="ChEBI" id="CHEBI:59789"/>
        <dbReference type="EC" id="2.1.1.163"/>
    </reaction>
</comment>
<comment type="catalytic activity">
    <reaction evidence="1">
        <text>a 2-methoxy-6-(all-trans-polyprenyl)benzene-1,4-diol + S-adenosyl-L-methionine = a 5-methoxy-2-methyl-3-(all-trans-polyprenyl)benzene-1,4-diol + S-adenosyl-L-homocysteine + H(+)</text>
        <dbReference type="Rhea" id="RHEA:28286"/>
        <dbReference type="Rhea" id="RHEA-COMP:10858"/>
        <dbReference type="Rhea" id="RHEA-COMP:10859"/>
        <dbReference type="ChEBI" id="CHEBI:15378"/>
        <dbReference type="ChEBI" id="CHEBI:57856"/>
        <dbReference type="ChEBI" id="CHEBI:59789"/>
        <dbReference type="ChEBI" id="CHEBI:84166"/>
        <dbReference type="ChEBI" id="CHEBI:84167"/>
        <dbReference type="EC" id="2.1.1.201"/>
    </reaction>
</comment>
<comment type="pathway">
    <text evidence="1">Quinol/quinone metabolism; menaquinone biosynthesis; menaquinol from 1,4-dihydroxy-2-naphthoate: step 2/2.</text>
</comment>
<comment type="pathway">
    <text evidence="1">Cofactor biosynthesis; ubiquinone biosynthesis.</text>
</comment>
<comment type="similarity">
    <text evidence="1">Belongs to the class I-like SAM-binding methyltransferase superfamily. MenG/UbiE family.</text>
</comment>
<organism>
    <name type="scientific">Legionella pneumophila subsp. pneumophila (strain Philadelphia 1 / ATCC 33152 / DSM 7513)</name>
    <dbReference type="NCBI Taxonomy" id="272624"/>
    <lineage>
        <taxon>Bacteria</taxon>
        <taxon>Pseudomonadati</taxon>
        <taxon>Pseudomonadota</taxon>
        <taxon>Gammaproteobacteria</taxon>
        <taxon>Legionellales</taxon>
        <taxon>Legionellaceae</taxon>
        <taxon>Legionella</taxon>
    </lineage>
</organism>
<feature type="chain" id="PRO_0000193287" description="Ubiquinone/menaquinone biosynthesis C-methyltransferase UbiE">
    <location>
        <begin position="1"/>
        <end position="250"/>
    </location>
</feature>
<feature type="binding site" evidence="1">
    <location>
        <position position="73"/>
    </location>
    <ligand>
        <name>S-adenosyl-L-methionine</name>
        <dbReference type="ChEBI" id="CHEBI:59789"/>
    </ligand>
</feature>
<feature type="binding site" evidence="1">
    <location>
        <position position="94"/>
    </location>
    <ligand>
        <name>S-adenosyl-L-methionine</name>
        <dbReference type="ChEBI" id="CHEBI:59789"/>
    </ligand>
</feature>
<feature type="binding site" evidence="1">
    <location>
        <begin position="122"/>
        <end position="123"/>
    </location>
    <ligand>
        <name>S-adenosyl-L-methionine</name>
        <dbReference type="ChEBI" id="CHEBI:59789"/>
    </ligand>
</feature>
<gene>
    <name evidence="1" type="primary">ubiE</name>
    <name type="ordered locus">lpg2903</name>
</gene>
<evidence type="ECO:0000255" key="1">
    <source>
        <dbReference type="HAMAP-Rule" id="MF_01813"/>
    </source>
</evidence>
<name>UBIE_LEGPH</name>